<keyword id="KW-0067">ATP-binding</keyword>
<keyword id="KW-0963">Cytoplasm</keyword>
<keyword id="KW-0315">Glutamine amidotransferase</keyword>
<keyword id="KW-0332">GMP biosynthesis</keyword>
<keyword id="KW-0436">Ligase</keyword>
<keyword id="KW-0460">Magnesium</keyword>
<keyword id="KW-0547">Nucleotide-binding</keyword>
<keyword id="KW-0658">Purine biosynthesis</keyword>
<keyword id="KW-1185">Reference proteome</keyword>
<protein>
    <recommendedName>
        <fullName>GMP synthase [glutamine-hydrolyzing]</fullName>
        <ecNumber evidence="1">6.3.5.2</ecNumber>
    </recommendedName>
    <alternativeName>
        <fullName>GMP synthetase</fullName>
    </alternativeName>
    <alternativeName>
        <fullName>Glutamine amidotransferase</fullName>
    </alternativeName>
</protein>
<name>GUAA_KLULA</name>
<accession>Q6CU71</accession>
<organism>
    <name type="scientific">Kluyveromyces lactis (strain ATCC 8585 / CBS 2359 / DSM 70799 / NBRC 1267 / NRRL Y-1140 / WM37)</name>
    <name type="common">Yeast</name>
    <name type="synonym">Candida sphaerica</name>
    <dbReference type="NCBI Taxonomy" id="284590"/>
    <lineage>
        <taxon>Eukaryota</taxon>
        <taxon>Fungi</taxon>
        <taxon>Dikarya</taxon>
        <taxon>Ascomycota</taxon>
        <taxon>Saccharomycotina</taxon>
        <taxon>Saccharomycetes</taxon>
        <taxon>Saccharomycetales</taxon>
        <taxon>Saccharomycetaceae</taxon>
        <taxon>Kluyveromyces</taxon>
    </lineage>
</organism>
<dbReference type="EC" id="6.3.5.2" evidence="1"/>
<dbReference type="EMBL" id="CR382123">
    <property type="protein sequence ID" value="CAH01369.1"/>
    <property type="molecule type" value="Genomic_DNA"/>
</dbReference>
<dbReference type="RefSeq" id="XP_452518.1">
    <property type="nucleotide sequence ID" value="XM_452518.1"/>
</dbReference>
<dbReference type="SMR" id="Q6CU71"/>
<dbReference type="FunCoup" id="Q6CU71">
    <property type="interactions" value="1116"/>
</dbReference>
<dbReference type="STRING" id="284590.Q6CU71"/>
<dbReference type="MEROPS" id="C26.957"/>
<dbReference type="PaxDb" id="284590-Q6CU71"/>
<dbReference type="KEGG" id="kla:KLLA0_C07172g"/>
<dbReference type="eggNOG" id="KOG1622">
    <property type="taxonomic scope" value="Eukaryota"/>
</dbReference>
<dbReference type="HOGENOM" id="CLU_014340_0_5_1"/>
<dbReference type="InParanoid" id="Q6CU71"/>
<dbReference type="OMA" id="IWQSFAV"/>
<dbReference type="UniPathway" id="UPA00189">
    <property type="reaction ID" value="UER00296"/>
</dbReference>
<dbReference type="Proteomes" id="UP000000598">
    <property type="component" value="Chromosome C"/>
</dbReference>
<dbReference type="GO" id="GO:0005829">
    <property type="term" value="C:cytosol"/>
    <property type="evidence" value="ECO:0007669"/>
    <property type="project" value="UniProtKB-SubCell"/>
</dbReference>
<dbReference type="GO" id="GO:0005524">
    <property type="term" value="F:ATP binding"/>
    <property type="evidence" value="ECO:0007669"/>
    <property type="project" value="UniProtKB-KW"/>
</dbReference>
<dbReference type="GO" id="GO:0003922">
    <property type="term" value="F:GMP synthase (glutamine-hydrolyzing) activity"/>
    <property type="evidence" value="ECO:0000250"/>
    <property type="project" value="UniProtKB"/>
</dbReference>
<dbReference type="GO" id="GO:0003921">
    <property type="term" value="F:GMP synthase activity"/>
    <property type="evidence" value="ECO:0007669"/>
    <property type="project" value="InterPro"/>
</dbReference>
<dbReference type="GO" id="GO:0006177">
    <property type="term" value="P:GMP biosynthetic process"/>
    <property type="evidence" value="ECO:0000250"/>
    <property type="project" value="UniProtKB"/>
</dbReference>
<dbReference type="CDD" id="cd01742">
    <property type="entry name" value="GATase1_GMP_Synthase"/>
    <property type="match status" value="1"/>
</dbReference>
<dbReference type="CDD" id="cd01997">
    <property type="entry name" value="GMP_synthase_C"/>
    <property type="match status" value="1"/>
</dbReference>
<dbReference type="FunFam" id="3.30.300.10:FF:000002">
    <property type="entry name" value="GMP synthase [glutamine-hydrolyzing]"/>
    <property type="match status" value="1"/>
</dbReference>
<dbReference type="FunFam" id="3.40.50.620:FF:000001">
    <property type="entry name" value="GMP synthase [glutamine-hydrolyzing]"/>
    <property type="match status" value="1"/>
</dbReference>
<dbReference type="FunFam" id="3.40.50.880:FF:000001">
    <property type="entry name" value="GMP synthase [glutamine-hydrolyzing]"/>
    <property type="match status" value="1"/>
</dbReference>
<dbReference type="Gene3D" id="3.30.300.10">
    <property type="match status" value="1"/>
</dbReference>
<dbReference type="Gene3D" id="3.40.50.880">
    <property type="match status" value="1"/>
</dbReference>
<dbReference type="Gene3D" id="3.40.50.620">
    <property type="entry name" value="HUPs"/>
    <property type="match status" value="1"/>
</dbReference>
<dbReference type="HAMAP" id="MF_00344">
    <property type="entry name" value="GMP_synthase"/>
    <property type="match status" value="1"/>
</dbReference>
<dbReference type="InterPro" id="IPR029062">
    <property type="entry name" value="Class_I_gatase-like"/>
</dbReference>
<dbReference type="InterPro" id="IPR017926">
    <property type="entry name" value="GATASE"/>
</dbReference>
<dbReference type="InterPro" id="IPR001674">
    <property type="entry name" value="GMP_synth_C"/>
</dbReference>
<dbReference type="InterPro" id="IPR004739">
    <property type="entry name" value="GMP_synth_GATase"/>
</dbReference>
<dbReference type="InterPro" id="IPR022955">
    <property type="entry name" value="GMP_synthase"/>
</dbReference>
<dbReference type="InterPro" id="IPR025777">
    <property type="entry name" value="GMPS_ATP_PPase_dom"/>
</dbReference>
<dbReference type="InterPro" id="IPR022310">
    <property type="entry name" value="NAD/GMP_synthase"/>
</dbReference>
<dbReference type="InterPro" id="IPR014729">
    <property type="entry name" value="Rossmann-like_a/b/a_fold"/>
</dbReference>
<dbReference type="NCBIfam" id="TIGR00884">
    <property type="entry name" value="guaA_Cterm"/>
    <property type="match status" value="1"/>
</dbReference>
<dbReference type="NCBIfam" id="TIGR00888">
    <property type="entry name" value="guaA_Nterm"/>
    <property type="match status" value="1"/>
</dbReference>
<dbReference type="NCBIfam" id="NF000848">
    <property type="entry name" value="PRK00074.1"/>
    <property type="match status" value="1"/>
</dbReference>
<dbReference type="PANTHER" id="PTHR11922:SF2">
    <property type="entry name" value="GMP SYNTHASE [GLUTAMINE-HYDROLYZING]"/>
    <property type="match status" value="1"/>
</dbReference>
<dbReference type="PANTHER" id="PTHR11922">
    <property type="entry name" value="GMP SYNTHASE-RELATED"/>
    <property type="match status" value="1"/>
</dbReference>
<dbReference type="Pfam" id="PF00117">
    <property type="entry name" value="GATase"/>
    <property type="match status" value="1"/>
</dbReference>
<dbReference type="Pfam" id="PF00958">
    <property type="entry name" value="GMP_synt_C"/>
    <property type="match status" value="1"/>
</dbReference>
<dbReference type="Pfam" id="PF02540">
    <property type="entry name" value="NAD_synthase"/>
    <property type="match status" value="1"/>
</dbReference>
<dbReference type="PRINTS" id="PR00097">
    <property type="entry name" value="ANTSNTHASEII"/>
</dbReference>
<dbReference type="PRINTS" id="PR00096">
    <property type="entry name" value="GATASE"/>
</dbReference>
<dbReference type="SUPFAM" id="SSF52402">
    <property type="entry name" value="Adenine nucleotide alpha hydrolases-like"/>
    <property type="match status" value="1"/>
</dbReference>
<dbReference type="SUPFAM" id="SSF52317">
    <property type="entry name" value="Class I glutamine amidotransferase-like"/>
    <property type="match status" value="1"/>
</dbReference>
<dbReference type="SUPFAM" id="SSF54810">
    <property type="entry name" value="GMP synthetase C-terminal dimerisation domain"/>
    <property type="match status" value="1"/>
</dbReference>
<dbReference type="PROSITE" id="PS51273">
    <property type="entry name" value="GATASE_TYPE_1"/>
    <property type="match status" value="1"/>
</dbReference>
<dbReference type="PROSITE" id="PS51553">
    <property type="entry name" value="GMPS_ATP_PPASE"/>
    <property type="match status" value="1"/>
</dbReference>
<reference key="1">
    <citation type="journal article" date="2004" name="Nature">
        <title>Genome evolution in yeasts.</title>
        <authorList>
            <person name="Dujon B."/>
            <person name="Sherman D."/>
            <person name="Fischer G."/>
            <person name="Durrens P."/>
            <person name="Casaregola S."/>
            <person name="Lafontaine I."/>
            <person name="de Montigny J."/>
            <person name="Marck C."/>
            <person name="Neuveglise C."/>
            <person name="Talla E."/>
            <person name="Goffard N."/>
            <person name="Frangeul L."/>
            <person name="Aigle M."/>
            <person name="Anthouard V."/>
            <person name="Babour A."/>
            <person name="Barbe V."/>
            <person name="Barnay S."/>
            <person name="Blanchin S."/>
            <person name="Beckerich J.-M."/>
            <person name="Beyne E."/>
            <person name="Bleykasten C."/>
            <person name="Boisrame A."/>
            <person name="Boyer J."/>
            <person name="Cattolico L."/>
            <person name="Confanioleri F."/>
            <person name="de Daruvar A."/>
            <person name="Despons L."/>
            <person name="Fabre E."/>
            <person name="Fairhead C."/>
            <person name="Ferry-Dumazet H."/>
            <person name="Groppi A."/>
            <person name="Hantraye F."/>
            <person name="Hennequin C."/>
            <person name="Jauniaux N."/>
            <person name="Joyet P."/>
            <person name="Kachouri R."/>
            <person name="Kerrest A."/>
            <person name="Koszul R."/>
            <person name="Lemaire M."/>
            <person name="Lesur I."/>
            <person name="Ma L."/>
            <person name="Muller H."/>
            <person name="Nicaud J.-M."/>
            <person name="Nikolski M."/>
            <person name="Oztas S."/>
            <person name="Ozier-Kalogeropoulos O."/>
            <person name="Pellenz S."/>
            <person name="Potier S."/>
            <person name="Richard G.-F."/>
            <person name="Straub M.-L."/>
            <person name="Suleau A."/>
            <person name="Swennen D."/>
            <person name="Tekaia F."/>
            <person name="Wesolowski-Louvel M."/>
            <person name="Westhof E."/>
            <person name="Wirth B."/>
            <person name="Zeniou-Meyer M."/>
            <person name="Zivanovic Y."/>
            <person name="Bolotin-Fukuhara M."/>
            <person name="Thierry A."/>
            <person name="Bouchier C."/>
            <person name="Caudron B."/>
            <person name="Scarpelli C."/>
            <person name="Gaillardin C."/>
            <person name="Weissenbach J."/>
            <person name="Wincker P."/>
            <person name="Souciet J.-L."/>
        </authorList>
    </citation>
    <scope>NUCLEOTIDE SEQUENCE [LARGE SCALE GENOMIC DNA]</scope>
    <source>
        <strain>ATCC 8585 / CBS 2359 / DSM 70799 / NBRC 1267 / NRRL Y-1140 / WM37</strain>
    </source>
</reference>
<proteinExistence type="inferred from homology"/>
<sequence length="524" mass="58555">MSPVEVSNVFDTILVLDFGSQYSHLITRRLREFNVYAEMLPCTQKIADLHWKPKGVILSGGPYSVYEKDAPHVDKAIFDLGVPILGICYGLQEIAWINNTEVGRGEKREYGPATLRVEDKSCPLFANVDHSTVWMSHHDKVHNLPAGFKITATSENSPFCGIANEDKQIYGIQFHPEVTHSTQGKTLLRNFAVDICKASQSWNMENFIDTEINRIRELVGPDAEVIGAVSGGVDSTVAAKLMDRAIGDRFHAIMVDNGVLRLNEAATVKKTLGEGLGINLTVVDASDEFLDKLKGVTDPEKKRKIIGNTFIHVFEREAAKIQPKNGKEIEFLLQGTLYPDVIESISFKGPSQTIKTHHNVGGLLENMKLKLIEPLRELFKDEVRELGELLGISHELVWRHPFPGPGIAIRVLGEVTREQVAIARKADYIYIEEIRKAGLYNNISQAFACLLPVKSVGVMGDQRTYEQVIALRAIETTDFMTADWYPFEHSFLKKVASRIVNEVDGVARVTYDITSKPPATVEWE</sequence>
<gene>
    <name type="primary">GUA1</name>
    <name type="ordered locus">KLLA0C07172g</name>
</gene>
<evidence type="ECO:0000250" key="1">
    <source>
        <dbReference type="UniProtKB" id="P38625"/>
    </source>
</evidence>
<evidence type="ECO:0000250" key="2">
    <source>
        <dbReference type="UniProtKB" id="P49915"/>
    </source>
</evidence>
<evidence type="ECO:0000250" key="3">
    <source>
        <dbReference type="UniProtKB" id="Q4WFT3"/>
    </source>
</evidence>
<evidence type="ECO:0000250" key="4">
    <source>
        <dbReference type="UniProtKB" id="Q9P772"/>
    </source>
</evidence>
<evidence type="ECO:0000255" key="5">
    <source>
        <dbReference type="PROSITE-ProRule" id="PRU00605"/>
    </source>
</evidence>
<evidence type="ECO:0000255" key="6">
    <source>
        <dbReference type="PROSITE-ProRule" id="PRU00886"/>
    </source>
</evidence>
<feature type="chain" id="PRO_0000286151" description="GMP synthase [glutamine-hydrolyzing]">
    <location>
        <begin position="1"/>
        <end position="524"/>
    </location>
</feature>
<feature type="domain" description="Glutamine amidotransferase type-1" evidence="5">
    <location>
        <begin position="12"/>
        <end position="201"/>
    </location>
</feature>
<feature type="domain" description="GMPS ATP-PPase" evidence="6">
    <location>
        <begin position="202"/>
        <end position="399"/>
    </location>
</feature>
<feature type="active site" description="Nucleophile" evidence="5">
    <location>
        <position position="88"/>
    </location>
</feature>
<feature type="active site" evidence="5">
    <location>
        <position position="175"/>
    </location>
</feature>
<feature type="active site" evidence="5">
    <location>
        <position position="177"/>
    </location>
</feature>
<feature type="binding site" evidence="6">
    <location>
        <begin position="230"/>
        <end position="236"/>
    </location>
    <ligand>
        <name>ATP</name>
        <dbReference type="ChEBI" id="CHEBI:30616"/>
    </ligand>
</feature>
<feature type="binding site" evidence="2">
    <location>
        <position position="303"/>
    </location>
    <ligand>
        <name>XMP</name>
        <dbReference type="ChEBI" id="CHEBI:57464"/>
    </ligand>
</feature>
<feature type="binding site" evidence="2">
    <location>
        <position position="461"/>
    </location>
    <ligand>
        <name>XMP</name>
        <dbReference type="ChEBI" id="CHEBI:57464"/>
    </ligand>
</feature>
<feature type="binding site" evidence="2">
    <location>
        <position position="516"/>
    </location>
    <ligand>
        <name>XMP</name>
        <dbReference type="ChEBI" id="CHEBI:57464"/>
    </ligand>
</feature>
<feature type="binding site" evidence="2">
    <location>
        <position position="522"/>
    </location>
    <ligand>
        <name>XMP</name>
        <dbReference type="ChEBI" id="CHEBI:57464"/>
    </ligand>
</feature>
<comment type="function">
    <text evidence="1">Catalyzes the conversion of xanthine monophosphate (XMP) to GMP in the presence of glutamine and ATP through an adenyl-XMP intermediate.</text>
</comment>
<comment type="catalytic activity">
    <reaction evidence="1">
        <text>XMP + L-glutamine + ATP + H2O = GMP + L-glutamate + AMP + diphosphate + 2 H(+)</text>
        <dbReference type="Rhea" id="RHEA:11680"/>
        <dbReference type="ChEBI" id="CHEBI:15377"/>
        <dbReference type="ChEBI" id="CHEBI:15378"/>
        <dbReference type="ChEBI" id="CHEBI:29985"/>
        <dbReference type="ChEBI" id="CHEBI:30616"/>
        <dbReference type="ChEBI" id="CHEBI:33019"/>
        <dbReference type="ChEBI" id="CHEBI:57464"/>
        <dbReference type="ChEBI" id="CHEBI:58115"/>
        <dbReference type="ChEBI" id="CHEBI:58359"/>
        <dbReference type="ChEBI" id="CHEBI:456215"/>
        <dbReference type="EC" id="6.3.5.2"/>
    </reaction>
</comment>
<comment type="cofactor">
    <cofactor evidence="3">
        <name>Mg(2+)</name>
        <dbReference type="ChEBI" id="CHEBI:18420"/>
    </cofactor>
</comment>
<comment type="pathway">
    <text evidence="1">Purine metabolism; GMP biosynthesis; GMP from XMP (L-Gln route): step 1/1.</text>
</comment>
<comment type="subunit">
    <text evidence="3">Homodimer.</text>
</comment>
<comment type="subcellular location">
    <subcellularLocation>
        <location evidence="4">Cytoplasm</location>
        <location evidence="4">Cytosol</location>
    </subcellularLocation>
</comment>